<dbReference type="EC" id="1.1.1.298" evidence="1"/>
<dbReference type="EMBL" id="CP001164">
    <property type="protein sequence ID" value="ACI36934.1"/>
    <property type="molecule type" value="Genomic_DNA"/>
</dbReference>
<dbReference type="RefSeq" id="WP_001001189.1">
    <property type="nucleotide sequence ID" value="NC_011353.1"/>
</dbReference>
<dbReference type="SMR" id="B5YU50"/>
<dbReference type="KEGG" id="ecf:ECH74115_1245"/>
<dbReference type="HOGENOM" id="CLU_084441_0_0_6"/>
<dbReference type="GO" id="GO:0035527">
    <property type="term" value="F:3-hydroxypropionate dehydrogenase (NADP+) activity"/>
    <property type="evidence" value="ECO:0007669"/>
    <property type="project" value="UniProtKB-UniRule"/>
</dbReference>
<dbReference type="GO" id="GO:0019740">
    <property type="term" value="P:nitrogen utilization"/>
    <property type="evidence" value="ECO:0007669"/>
    <property type="project" value="UniProtKB-UniRule"/>
</dbReference>
<dbReference type="GO" id="GO:0006212">
    <property type="term" value="P:uracil catabolic process"/>
    <property type="evidence" value="ECO:0007669"/>
    <property type="project" value="UniProtKB-UniRule"/>
</dbReference>
<dbReference type="CDD" id="cd02148">
    <property type="entry name" value="RutE-like"/>
    <property type="match status" value="1"/>
</dbReference>
<dbReference type="FunFam" id="3.40.109.10:FF:000003">
    <property type="entry name" value="Probable malonic semialdehyde reductase RutE"/>
    <property type="match status" value="1"/>
</dbReference>
<dbReference type="Gene3D" id="3.40.109.10">
    <property type="entry name" value="NADH Oxidase"/>
    <property type="match status" value="1"/>
</dbReference>
<dbReference type="HAMAP" id="MF_01204">
    <property type="entry name" value="Oxidoreductase_RutE_HadB"/>
    <property type="match status" value="1"/>
</dbReference>
<dbReference type="InterPro" id="IPR029479">
    <property type="entry name" value="Nitroreductase"/>
</dbReference>
<dbReference type="InterPro" id="IPR000415">
    <property type="entry name" value="Nitroreductase-like"/>
</dbReference>
<dbReference type="InterPro" id="IPR050461">
    <property type="entry name" value="Nitroreductase_HadB/RutE"/>
</dbReference>
<dbReference type="InterPro" id="IPR023936">
    <property type="entry name" value="RutE-like"/>
</dbReference>
<dbReference type="NCBIfam" id="NF003768">
    <property type="entry name" value="PRK05365.1"/>
    <property type="match status" value="1"/>
</dbReference>
<dbReference type="PANTHER" id="PTHR43543">
    <property type="entry name" value="MALONIC SEMIALDEHYDE REDUCTASE RUTE-RELATED"/>
    <property type="match status" value="1"/>
</dbReference>
<dbReference type="PANTHER" id="PTHR43543:SF1">
    <property type="entry name" value="MALONIC SEMIALDEHYDE REDUCTASE RUTE-RELATED"/>
    <property type="match status" value="1"/>
</dbReference>
<dbReference type="Pfam" id="PF00881">
    <property type="entry name" value="Nitroreductase"/>
    <property type="match status" value="1"/>
</dbReference>
<dbReference type="SUPFAM" id="SSF55469">
    <property type="entry name" value="FMN-dependent nitroreductase-like"/>
    <property type="match status" value="1"/>
</dbReference>
<proteinExistence type="inferred from homology"/>
<accession>B5YU50</accession>
<keyword id="KW-0285">Flavoprotein</keyword>
<keyword id="KW-0288">FMN</keyword>
<keyword id="KW-0520">NAD</keyword>
<keyword id="KW-0521">NADP</keyword>
<keyword id="KW-0560">Oxidoreductase</keyword>
<gene>
    <name evidence="1" type="primary">rutE</name>
    <name type="ordered locus">ECH74115_1245</name>
</gene>
<protein>
    <recommendedName>
        <fullName evidence="1">Probable malonic semialdehyde reductase RutE</fullName>
        <ecNumber evidence="1">1.1.1.298</ecNumber>
    </recommendedName>
</protein>
<name>RUTE_ECO5E</name>
<sequence length="196" mass="21565">MNEAVSPGALSTLFTDARTHNGWRETPVSDETLRELYALMKWGPTSANCSPARIVFIRTAEGKERLRPALSSGNLQKTLTAPVTAIVAWDSEFYERLPQLFPHGDARSWFTSSPQLAEETAFRNSSMQAAYLIIACRALGLDTGPMSGFDRQHVDDAFFAGSTLKSNLLINIGYGDSSKLFARLPRLSFEEACGLL</sequence>
<organism>
    <name type="scientific">Escherichia coli O157:H7 (strain EC4115 / EHEC)</name>
    <dbReference type="NCBI Taxonomy" id="444450"/>
    <lineage>
        <taxon>Bacteria</taxon>
        <taxon>Pseudomonadati</taxon>
        <taxon>Pseudomonadota</taxon>
        <taxon>Gammaproteobacteria</taxon>
        <taxon>Enterobacterales</taxon>
        <taxon>Enterobacteriaceae</taxon>
        <taxon>Escherichia</taxon>
    </lineage>
</organism>
<reference key="1">
    <citation type="journal article" date="2011" name="Proc. Natl. Acad. Sci. U.S.A.">
        <title>Genomic anatomy of Escherichia coli O157:H7 outbreaks.</title>
        <authorList>
            <person name="Eppinger M."/>
            <person name="Mammel M.K."/>
            <person name="Leclerc J.E."/>
            <person name="Ravel J."/>
            <person name="Cebula T.A."/>
        </authorList>
    </citation>
    <scope>NUCLEOTIDE SEQUENCE [LARGE SCALE GENOMIC DNA]</scope>
    <source>
        <strain>EC4115 / EHEC</strain>
    </source>
</reference>
<evidence type="ECO:0000255" key="1">
    <source>
        <dbReference type="HAMAP-Rule" id="MF_01204"/>
    </source>
</evidence>
<feature type="chain" id="PRO_1000138690" description="Probable malonic semialdehyde reductase RutE">
    <location>
        <begin position="1"/>
        <end position="196"/>
    </location>
</feature>
<comment type="function">
    <text evidence="1">May reduce toxic product malonic semialdehyde to 3-hydroxypropionic acid, which is excreted.</text>
</comment>
<comment type="catalytic activity">
    <reaction evidence="1">
        <text>3-hydroxypropanoate + NADP(+) = 3-oxopropanoate + NADPH + H(+)</text>
        <dbReference type="Rhea" id="RHEA:26438"/>
        <dbReference type="ChEBI" id="CHEBI:15378"/>
        <dbReference type="ChEBI" id="CHEBI:16510"/>
        <dbReference type="ChEBI" id="CHEBI:33190"/>
        <dbReference type="ChEBI" id="CHEBI:57783"/>
        <dbReference type="ChEBI" id="CHEBI:58349"/>
        <dbReference type="EC" id="1.1.1.298"/>
    </reaction>
</comment>
<comment type="cofactor">
    <cofactor evidence="1">
        <name>FMN</name>
        <dbReference type="ChEBI" id="CHEBI:58210"/>
    </cofactor>
</comment>
<comment type="induction">
    <text evidence="1">Up-regulated by the nitrogen regulatory protein C (NtrC also called GlnG) and repressed by RutR.</text>
</comment>
<comment type="similarity">
    <text evidence="1">Belongs to the nitroreductase family. HadB/RutE subfamily.</text>
</comment>